<name>NUOK_SALPB</name>
<gene>
    <name evidence="1" type="primary">nuoK</name>
    <name type="ordered locus">SPAB_00659</name>
</gene>
<dbReference type="EC" id="7.1.1.-" evidence="1"/>
<dbReference type="EMBL" id="CP000886">
    <property type="protein sequence ID" value="ABX66085.1"/>
    <property type="molecule type" value="Genomic_DNA"/>
</dbReference>
<dbReference type="RefSeq" id="WP_000612687.1">
    <property type="nucleotide sequence ID" value="NC_010102.1"/>
</dbReference>
<dbReference type="SMR" id="A9N589"/>
<dbReference type="KEGG" id="spq:SPAB_00659"/>
<dbReference type="PATRIC" id="fig|1016998.12.peg.619"/>
<dbReference type="HOGENOM" id="CLU_144724_0_1_6"/>
<dbReference type="BioCyc" id="SENT1016998:SPAB_RS02740-MONOMER"/>
<dbReference type="Proteomes" id="UP000008556">
    <property type="component" value="Chromosome"/>
</dbReference>
<dbReference type="GO" id="GO:0030964">
    <property type="term" value="C:NADH dehydrogenase complex"/>
    <property type="evidence" value="ECO:0007669"/>
    <property type="project" value="TreeGrafter"/>
</dbReference>
<dbReference type="GO" id="GO:0005886">
    <property type="term" value="C:plasma membrane"/>
    <property type="evidence" value="ECO:0007669"/>
    <property type="project" value="UniProtKB-SubCell"/>
</dbReference>
<dbReference type="GO" id="GO:0050136">
    <property type="term" value="F:NADH:ubiquinone reductase (non-electrogenic) activity"/>
    <property type="evidence" value="ECO:0007669"/>
    <property type="project" value="UniProtKB-UniRule"/>
</dbReference>
<dbReference type="GO" id="GO:0048038">
    <property type="term" value="F:quinone binding"/>
    <property type="evidence" value="ECO:0007669"/>
    <property type="project" value="UniProtKB-KW"/>
</dbReference>
<dbReference type="GO" id="GO:0042773">
    <property type="term" value="P:ATP synthesis coupled electron transport"/>
    <property type="evidence" value="ECO:0007669"/>
    <property type="project" value="InterPro"/>
</dbReference>
<dbReference type="FunFam" id="1.10.287.3510:FF:000001">
    <property type="entry name" value="NADH-quinone oxidoreductase subunit K"/>
    <property type="match status" value="1"/>
</dbReference>
<dbReference type="Gene3D" id="1.10.287.3510">
    <property type="match status" value="1"/>
</dbReference>
<dbReference type="HAMAP" id="MF_01456">
    <property type="entry name" value="NDH1_NuoK"/>
    <property type="match status" value="1"/>
</dbReference>
<dbReference type="InterPro" id="IPR001133">
    <property type="entry name" value="NADH_UbQ_OxRdtase_chain4L/K"/>
</dbReference>
<dbReference type="InterPro" id="IPR039428">
    <property type="entry name" value="NUOK/Mnh_C1-like"/>
</dbReference>
<dbReference type="NCBIfam" id="NF004319">
    <property type="entry name" value="PRK05715.1-1"/>
    <property type="match status" value="1"/>
</dbReference>
<dbReference type="NCBIfam" id="NF004320">
    <property type="entry name" value="PRK05715.1-2"/>
    <property type="match status" value="1"/>
</dbReference>
<dbReference type="PANTHER" id="PTHR11434:SF16">
    <property type="entry name" value="NADH-UBIQUINONE OXIDOREDUCTASE CHAIN 4L"/>
    <property type="match status" value="1"/>
</dbReference>
<dbReference type="PANTHER" id="PTHR11434">
    <property type="entry name" value="NADH-UBIQUINONE OXIDOREDUCTASE SUBUNIT ND4L"/>
    <property type="match status" value="1"/>
</dbReference>
<dbReference type="Pfam" id="PF00420">
    <property type="entry name" value="Oxidored_q2"/>
    <property type="match status" value="1"/>
</dbReference>
<organism>
    <name type="scientific">Salmonella paratyphi B (strain ATCC BAA-1250 / SPB7)</name>
    <dbReference type="NCBI Taxonomy" id="1016998"/>
    <lineage>
        <taxon>Bacteria</taxon>
        <taxon>Pseudomonadati</taxon>
        <taxon>Pseudomonadota</taxon>
        <taxon>Gammaproteobacteria</taxon>
        <taxon>Enterobacterales</taxon>
        <taxon>Enterobacteriaceae</taxon>
        <taxon>Salmonella</taxon>
    </lineage>
</organism>
<reference key="1">
    <citation type="submission" date="2007-11" db="EMBL/GenBank/DDBJ databases">
        <authorList>
            <consortium name="The Salmonella enterica serovar Paratyphi B Genome Sequencing Project"/>
            <person name="McClelland M."/>
            <person name="Sanderson E.K."/>
            <person name="Porwollik S."/>
            <person name="Spieth J."/>
            <person name="Clifton W.S."/>
            <person name="Fulton R."/>
            <person name="Cordes M."/>
            <person name="Wollam A."/>
            <person name="Shah N."/>
            <person name="Pepin K."/>
            <person name="Bhonagiri V."/>
            <person name="Nash W."/>
            <person name="Johnson M."/>
            <person name="Thiruvilangam P."/>
            <person name="Wilson R."/>
        </authorList>
    </citation>
    <scope>NUCLEOTIDE SEQUENCE [LARGE SCALE GENOMIC DNA]</scope>
    <source>
        <strain>ATCC BAA-1250 / SPB7</strain>
    </source>
</reference>
<proteinExistence type="inferred from homology"/>
<feature type="chain" id="PRO_0000390228" description="NADH-quinone oxidoreductase subunit K">
    <location>
        <begin position="1"/>
        <end position="100"/>
    </location>
</feature>
<feature type="transmembrane region" description="Helical" evidence="1">
    <location>
        <begin position="4"/>
        <end position="24"/>
    </location>
</feature>
<feature type="transmembrane region" description="Helical" evidence="1">
    <location>
        <begin position="28"/>
        <end position="48"/>
    </location>
</feature>
<feature type="transmembrane region" description="Helical" evidence="1">
    <location>
        <begin position="60"/>
        <end position="80"/>
    </location>
</feature>
<accession>A9N589</accession>
<keyword id="KW-0997">Cell inner membrane</keyword>
<keyword id="KW-1003">Cell membrane</keyword>
<keyword id="KW-0472">Membrane</keyword>
<keyword id="KW-0520">NAD</keyword>
<keyword id="KW-0874">Quinone</keyword>
<keyword id="KW-1278">Translocase</keyword>
<keyword id="KW-0812">Transmembrane</keyword>
<keyword id="KW-1133">Transmembrane helix</keyword>
<keyword id="KW-0813">Transport</keyword>
<keyword id="KW-0830">Ubiquinone</keyword>
<evidence type="ECO:0000255" key="1">
    <source>
        <dbReference type="HAMAP-Rule" id="MF_01456"/>
    </source>
</evidence>
<sequence>MIPLTHGLILAAILFVLGLTGLVIRRNLLFMLIGLEIMINASALAFVVAGSYWGQTDGQVMYILAISLAAAEASIGLALLLQLHRRRQNLNIDSVSEMRG</sequence>
<protein>
    <recommendedName>
        <fullName evidence="1">NADH-quinone oxidoreductase subunit K</fullName>
        <ecNumber evidence="1">7.1.1.-</ecNumber>
    </recommendedName>
    <alternativeName>
        <fullName evidence="1">NADH dehydrogenase I subunit K</fullName>
    </alternativeName>
    <alternativeName>
        <fullName evidence="1">NDH-1 subunit K</fullName>
    </alternativeName>
</protein>
<comment type="function">
    <text evidence="1">NDH-1 shuttles electrons from NADH, via FMN and iron-sulfur (Fe-S) centers, to quinones in the respiratory chain. The immediate electron acceptor for the enzyme in this species is believed to be ubiquinone. Couples the redox reaction to proton translocation (for every two electrons transferred, four hydrogen ions are translocated across the cytoplasmic membrane), and thus conserves the redox energy in a proton gradient.</text>
</comment>
<comment type="catalytic activity">
    <reaction evidence="1">
        <text>a quinone + NADH + 5 H(+)(in) = a quinol + NAD(+) + 4 H(+)(out)</text>
        <dbReference type="Rhea" id="RHEA:57888"/>
        <dbReference type="ChEBI" id="CHEBI:15378"/>
        <dbReference type="ChEBI" id="CHEBI:24646"/>
        <dbReference type="ChEBI" id="CHEBI:57540"/>
        <dbReference type="ChEBI" id="CHEBI:57945"/>
        <dbReference type="ChEBI" id="CHEBI:132124"/>
    </reaction>
</comment>
<comment type="subunit">
    <text evidence="1">NDH-1 is composed of 13 different subunits. Subunits NuoA, H, J, K, L, M, N constitute the membrane sector of the complex.</text>
</comment>
<comment type="subcellular location">
    <subcellularLocation>
        <location evidence="1">Cell inner membrane</location>
        <topology evidence="1">Multi-pass membrane protein</topology>
    </subcellularLocation>
</comment>
<comment type="similarity">
    <text evidence="1">Belongs to the complex I subunit 4L family.</text>
</comment>